<organism>
    <name type="scientific">Arabidopsis thaliana</name>
    <name type="common">Mouse-ear cress</name>
    <dbReference type="NCBI Taxonomy" id="3702"/>
    <lineage>
        <taxon>Eukaryota</taxon>
        <taxon>Viridiplantae</taxon>
        <taxon>Streptophyta</taxon>
        <taxon>Embryophyta</taxon>
        <taxon>Tracheophyta</taxon>
        <taxon>Spermatophyta</taxon>
        <taxon>Magnoliopsida</taxon>
        <taxon>eudicotyledons</taxon>
        <taxon>Gunneridae</taxon>
        <taxon>Pentapetalae</taxon>
        <taxon>rosids</taxon>
        <taxon>malvids</taxon>
        <taxon>Brassicales</taxon>
        <taxon>Brassicaceae</taxon>
        <taxon>Camelineae</taxon>
        <taxon>Arabidopsis</taxon>
    </lineage>
</organism>
<keyword id="KW-0131">Cell cycle</keyword>
<keyword id="KW-0132">Cell division</keyword>
<keyword id="KW-0195">Cyclin</keyword>
<keyword id="KW-1185">Reference proteome</keyword>
<reference key="1">
    <citation type="journal article" date="1999" name="Nature">
        <title>Sequence and analysis of chromosome 2 of the plant Arabidopsis thaliana.</title>
        <authorList>
            <person name="Lin X."/>
            <person name="Kaul S."/>
            <person name="Rounsley S.D."/>
            <person name="Shea T.P."/>
            <person name="Benito M.-I."/>
            <person name="Town C.D."/>
            <person name="Fujii C.Y."/>
            <person name="Mason T.M."/>
            <person name="Bowman C.L."/>
            <person name="Barnstead M.E."/>
            <person name="Feldblyum T.V."/>
            <person name="Buell C.R."/>
            <person name="Ketchum K.A."/>
            <person name="Lee J.J."/>
            <person name="Ronning C.M."/>
            <person name="Koo H.L."/>
            <person name="Moffat K.S."/>
            <person name="Cronin L.A."/>
            <person name="Shen M."/>
            <person name="Pai G."/>
            <person name="Van Aken S."/>
            <person name="Umayam L."/>
            <person name="Tallon L.J."/>
            <person name="Gill J.E."/>
            <person name="Adams M.D."/>
            <person name="Carrera A.J."/>
            <person name="Creasy T.H."/>
            <person name="Goodman H.M."/>
            <person name="Somerville C.R."/>
            <person name="Copenhaver G.P."/>
            <person name="Preuss D."/>
            <person name="Nierman W.C."/>
            <person name="White O."/>
            <person name="Eisen J.A."/>
            <person name="Salzberg S.L."/>
            <person name="Fraser C.M."/>
            <person name="Venter J.C."/>
        </authorList>
    </citation>
    <scope>NUCLEOTIDE SEQUENCE [LARGE SCALE GENOMIC DNA]</scope>
    <source>
        <strain>cv. Columbia</strain>
    </source>
</reference>
<reference key="2">
    <citation type="journal article" date="2017" name="Plant J.">
        <title>Araport11: a complete reannotation of the Arabidopsis thaliana reference genome.</title>
        <authorList>
            <person name="Cheng C.Y."/>
            <person name="Krishnakumar V."/>
            <person name="Chan A.P."/>
            <person name="Thibaud-Nissen F."/>
            <person name="Schobel S."/>
            <person name="Town C.D."/>
        </authorList>
    </citation>
    <scope>GENOME REANNOTATION</scope>
    <source>
        <strain>cv. Columbia</strain>
    </source>
</reference>
<reference key="3">
    <citation type="submission" date="2005-06" db="EMBL/GenBank/DDBJ databases">
        <title>Arabidopsis ORF clones.</title>
        <authorList>
            <person name="Kim C.J."/>
            <person name="Chen H."/>
            <person name="Cheuk R.F."/>
            <person name="Shinn P."/>
            <person name="Ecker J.R."/>
        </authorList>
    </citation>
    <scope>NUCLEOTIDE SEQUENCE [LARGE SCALE MRNA]</scope>
    <source>
        <strain>cv. Columbia</strain>
    </source>
</reference>
<reference key="4">
    <citation type="submission" date="2006-07" db="EMBL/GenBank/DDBJ databases">
        <title>Large-scale analysis of RIKEN Arabidopsis full-length (RAFL) cDNAs.</title>
        <authorList>
            <person name="Totoki Y."/>
            <person name="Seki M."/>
            <person name="Ishida J."/>
            <person name="Nakajima M."/>
            <person name="Enju A."/>
            <person name="Kamiya A."/>
            <person name="Narusaka M."/>
            <person name="Shin-i T."/>
            <person name="Nakagawa M."/>
            <person name="Sakamoto N."/>
            <person name="Oishi K."/>
            <person name="Kohara Y."/>
            <person name="Kobayashi M."/>
            <person name="Toyoda A."/>
            <person name="Sakaki Y."/>
            <person name="Sakurai T."/>
            <person name="Iida K."/>
            <person name="Akiyama K."/>
            <person name="Satou M."/>
            <person name="Toyoda T."/>
            <person name="Konagaya A."/>
            <person name="Carninci P."/>
            <person name="Kawai J."/>
            <person name="Hayashizaki Y."/>
            <person name="Shinozaki K."/>
        </authorList>
    </citation>
    <scope>NUCLEOTIDE SEQUENCE [LARGE SCALE MRNA]</scope>
    <source>
        <strain>cv. Columbia</strain>
    </source>
</reference>
<reference key="5">
    <citation type="journal article" date="2004" name="Cell. Mol. Life Sci.">
        <title>Molecular characterization of Arabidopsis PHO80-like proteins, a novel class of CDKA;1-interacting cyclins.</title>
        <authorList>
            <person name="Torres Acosta J.A."/>
            <person name="de Almeida Engler J."/>
            <person name="Raes J."/>
            <person name="Magyar Z."/>
            <person name="de Groodt R."/>
            <person name="Inze D."/>
            <person name="de Veylder L."/>
        </authorList>
    </citation>
    <scope>TISSUE SPECIFICITY</scope>
    <scope>INTERACTION WITH CDKA-1</scope>
</reference>
<reference key="6">
    <citation type="journal article" date="2004" name="Plant Physiol.">
        <title>Genome-wide analysis of the cyclin family in Arabidopsis and comparative phylogenetic analysis of plant cyclin-like proteins.</title>
        <authorList>
            <person name="Wang G."/>
            <person name="Kong H."/>
            <person name="Sun Y."/>
            <person name="Zhang X."/>
            <person name="Zhang W."/>
            <person name="Altman N."/>
            <person name="dePamphilis C.W."/>
            <person name="Ma H."/>
        </authorList>
    </citation>
    <scope>GENE FAMILY</scope>
    <scope>NOMENCLATURE</scope>
</reference>
<comment type="subunit">
    <text evidence="1">Interacts with CDKA-1.</text>
</comment>
<comment type="interaction">
    <interactant intactId="EBI-1773819">
        <id>O80513</id>
    </interactant>
    <interactant intactId="EBI-371713">
        <id>P24100</id>
        <label>CDKA-1</label>
    </interactant>
    <organismsDiffer>false</organismsDiffer>
    <experiments>2</experiments>
</comment>
<comment type="interaction">
    <interactant intactId="EBI-1773819">
        <id>O80513</id>
    </interactant>
    <interactant intactId="EBI-4446727">
        <id>Q94ID6</id>
        <label>ERF12</label>
    </interactant>
    <organismsDiffer>false</organismsDiffer>
    <experiments>3</experiments>
</comment>
<comment type="interaction">
    <interactant intactId="EBI-1773819">
        <id>O80513</id>
    </interactant>
    <interactant intactId="EBI-4426557">
        <id>Q84MB2</id>
        <label>TIFY8</label>
    </interactant>
    <organismsDiffer>false</organismsDiffer>
    <experiments>5</experiments>
</comment>
<comment type="tissue specificity">
    <text evidence="1">Expressed in roots, stems and flowers. Expressed in the shoot apex, leaf primordia and young leaves.</text>
</comment>
<comment type="similarity">
    <text evidence="2">Belongs to the cyclin family. Cyclin U/P subfamily.</text>
</comment>
<name>CCU41_ARATH</name>
<accession>O80513</accession>
<proteinExistence type="evidence at protein level"/>
<protein>
    <recommendedName>
        <fullName>Cyclin-U4-1</fullName>
        <shortName>CycU4;1</shortName>
    </recommendedName>
    <alternativeName>
        <fullName>Cyclin-P4.1</fullName>
        <shortName>CycP4;1</shortName>
    </alternativeName>
</protein>
<dbReference type="EMBL" id="AC003672">
    <property type="protein sequence ID" value="AAC27476.1"/>
    <property type="molecule type" value="Genomic_DNA"/>
</dbReference>
<dbReference type="EMBL" id="CP002685">
    <property type="protein sequence ID" value="AEC10461.1"/>
    <property type="molecule type" value="Genomic_DNA"/>
</dbReference>
<dbReference type="EMBL" id="BT021978">
    <property type="protein sequence ID" value="AAY17415.1"/>
    <property type="molecule type" value="mRNA"/>
</dbReference>
<dbReference type="EMBL" id="BT023473">
    <property type="protein sequence ID" value="AAY57312.1"/>
    <property type="molecule type" value="mRNA"/>
</dbReference>
<dbReference type="EMBL" id="AK229380">
    <property type="protein sequence ID" value="BAF01242.1"/>
    <property type="molecule type" value="mRNA"/>
</dbReference>
<dbReference type="PIR" id="T01601">
    <property type="entry name" value="T01601"/>
</dbReference>
<dbReference type="RefSeq" id="NP_182002.1">
    <property type="nucleotide sequence ID" value="NM_130038.4"/>
</dbReference>
<dbReference type="SMR" id="O80513"/>
<dbReference type="BioGRID" id="4418">
    <property type="interactions" value="3"/>
</dbReference>
<dbReference type="FunCoup" id="O80513">
    <property type="interactions" value="215"/>
</dbReference>
<dbReference type="IntAct" id="O80513">
    <property type="interactions" value="3"/>
</dbReference>
<dbReference type="STRING" id="3702.O80513"/>
<dbReference type="PaxDb" id="3702-AT2G44740.1"/>
<dbReference type="EnsemblPlants" id="AT2G44740.1">
    <property type="protein sequence ID" value="AT2G44740.1"/>
    <property type="gene ID" value="AT2G44740"/>
</dbReference>
<dbReference type="GeneID" id="819082"/>
<dbReference type="Gramene" id="AT2G44740.1">
    <property type="protein sequence ID" value="AT2G44740.1"/>
    <property type="gene ID" value="AT2G44740"/>
</dbReference>
<dbReference type="KEGG" id="ath:AT2G44740"/>
<dbReference type="Araport" id="AT2G44740"/>
<dbReference type="TAIR" id="AT2G44740">
    <property type="gene designation" value="CYCP4"/>
</dbReference>
<dbReference type="eggNOG" id="KOG1674">
    <property type="taxonomic scope" value="Eukaryota"/>
</dbReference>
<dbReference type="HOGENOM" id="CLU_057371_1_1_1"/>
<dbReference type="InParanoid" id="O80513"/>
<dbReference type="OMA" id="FQTYCAY"/>
<dbReference type="OrthoDB" id="337735at2759"/>
<dbReference type="PhylomeDB" id="O80513"/>
<dbReference type="PRO" id="PR:O80513"/>
<dbReference type="Proteomes" id="UP000006548">
    <property type="component" value="Chromosome 2"/>
</dbReference>
<dbReference type="ExpressionAtlas" id="O80513">
    <property type="expression patterns" value="baseline and differential"/>
</dbReference>
<dbReference type="GO" id="GO:0019901">
    <property type="term" value="F:protein kinase binding"/>
    <property type="evidence" value="ECO:0007669"/>
    <property type="project" value="InterPro"/>
</dbReference>
<dbReference type="GO" id="GO:0051301">
    <property type="term" value="P:cell division"/>
    <property type="evidence" value="ECO:0007669"/>
    <property type="project" value="UniProtKB-KW"/>
</dbReference>
<dbReference type="CDD" id="cd20604">
    <property type="entry name" value="CYCLIN_AtCycU-like"/>
    <property type="match status" value="1"/>
</dbReference>
<dbReference type="Gene3D" id="1.10.472.10">
    <property type="entry name" value="Cyclin-like"/>
    <property type="match status" value="1"/>
</dbReference>
<dbReference type="InterPro" id="IPR036915">
    <property type="entry name" value="Cyclin-like_sf"/>
</dbReference>
<dbReference type="InterPro" id="IPR012389">
    <property type="entry name" value="Cyclin_P/U"/>
</dbReference>
<dbReference type="InterPro" id="IPR013922">
    <property type="entry name" value="Cyclin_PHO80-like"/>
</dbReference>
<dbReference type="PANTHER" id="PTHR15615">
    <property type="match status" value="1"/>
</dbReference>
<dbReference type="PANTHER" id="PTHR15615:SF101">
    <property type="entry name" value="CYCLIN-U4-1"/>
    <property type="match status" value="1"/>
</dbReference>
<dbReference type="Pfam" id="PF08613">
    <property type="entry name" value="Cyclin"/>
    <property type="match status" value="1"/>
</dbReference>
<dbReference type="PIRSF" id="PIRSF027110">
    <property type="entry name" value="PREG"/>
    <property type="match status" value="1"/>
</dbReference>
<dbReference type="SUPFAM" id="SSF47954">
    <property type="entry name" value="Cyclin-like"/>
    <property type="match status" value="1"/>
</dbReference>
<sequence length="202" mass="23043">MAELENPSVMSKLIAFLSSLLERVAESNDLTRRVATQSQRVSVFHGLSRPTITIQSYLERIFKYANCSPSCFVVAYVYLDRFTHRQPSLPINSFNVHRLLITSVMVAAKFLDDLYYNNAYYAKVGGISTKEMNFLELDFLFGLGFELNVTPNTFNAYFSYLQKEMTLLQPLSLVVVPSSRSLITFNDDEASHQKQQQQQLAV</sequence>
<gene>
    <name type="primary">CYCU4-1</name>
    <name type="ordered locus">At2g44740</name>
    <name type="ORF">F16B22.23</name>
</gene>
<feature type="chain" id="PRO_0000287072" description="Cyclin-U4-1">
    <location>
        <begin position="1"/>
        <end position="202"/>
    </location>
</feature>
<evidence type="ECO:0000269" key="1">
    <source>
    </source>
</evidence>
<evidence type="ECO:0000305" key="2"/>